<evidence type="ECO:0000250" key="1"/>
<evidence type="ECO:0000255" key="2"/>
<evidence type="ECO:0000305" key="3"/>
<protein>
    <recommendedName>
        <fullName>UPF0754 membrane protein LMHCC_0318</fullName>
    </recommendedName>
</protein>
<keyword id="KW-1003">Cell membrane</keyword>
<keyword id="KW-0472">Membrane</keyword>
<keyword id="KW-0812">Transmembrane</keyword>
<keyword id="KW-1133">Transmembrane helix</keyword>
<feature type="chain" id="PRO_0000388297" description="UPF0754 membrane protein LMHCC_0318">
    <location>
        <begin position="1"/>
        <end position="377"/>
    </location>
</feature>
<feature type="transmembrane region" description="Helical" evidence="2">
    <location>
        <begin position="1"/>
        <end position="21"/>
    </location>
</feature>
<feature type="transmembrane region" description="Helical" evidence="2">
    <location>
        <begin position="357"/>
        <end position="377"/>
    </location>
</feature>
<comment type="subcellular location">
    <subcellularLocation>
        <location evidence="1">Cell membrane</location>
        <topology evidence="1">Multi-pass membrane protein</topology>
    </subcellularLocation>
</comment>
<comment type="similarity">
    <text evidence="3">Belongs to the UPF0754 family.</text>
</comment>
<accession>B8DF86</accession>
<reference key="1">
    <citation type="journal article" date="2011" name="J. Bacteriol.">
        <title>Genome sequence of lineage III Listeria monocytogenes strain HCC23.</title>
        <authorList>
            <person name="Steele C.L."/>
            <person name="Donaldson J.R."/>
            <person name="Paul D."/>
            <person name="Banes M.M."/>
            <person name="Arick T."/>
            <person name="Bridges S.M."/>
            <person name="Lawrence M.L."/>
        </authorList>
    </citation>
    <scope>NUCLEOTIDE SEQUENCE [LARGE SCALE GENOMIC DNA]</scope>
    <source>
        <strain>HCC23</strain>
    </source>
</reference>
<gene>
    <name type="ordered locus">LMHCC_0318</name>
</gene>
<sequence>MSVLFTILLMAVIGGFIGAMTNYIAIRMLFRPYKAIYLFNKRLPFTPGLIPKRRDELAEHIGKVVVSHLLTEDAIRARLLDENLQKEITDTITKMFHEKMQLETTPNELLHHFGYENAEIRSMAWIEKTMEKEINHFLSTKKTTKMSDLIPTMLESELTTKLPHVTERITSKMALFVASEEGKSQIKQMLQKFFEEHGKMGSMARMFINVDSFSEKIQQEGLKLIDQEDTKNLINQLLTTEWKNFEAKELQELIPTEKQVHLAGQLTSELIQTFPHEKLFNQPIQVILRNYETTIVEKVIPFAVERMLDFVATHSAEIVERMDLAKLVETQIATFSLPEIEKLVVEISGRELKMITYLGGILGGFIGVIQGILAMWI</sequence>
<name>Y318_LISMH</name>
<organism>
    <name type="scientific">Listeria monocytogenes serotype 4a (strain HCC23)</name>
    <dbReference type="NCBI Taxonomy" id="552536"/>
    <lineage>
        <taxon>Bacteria</taxon>
        <taxon>Bacillati</taxon>
        <taxon>Bacillota</taxon>
        <taxon>Bacilli</taxon>
        <taxon>Bacillales</taxon>
        <taxon>Listeriaceae</taxon>
        <taxon>Listeria</taxon>
    </lineage>
</organism>
<dbReference type="EMBL" id="CP001175">
    <property type="protein sequence ID" value="ACK38678.1"/>
    <property type="molecule type" value="Genomic_DNA"/>
</dbReference>
<dbReference type="RefSeq" id="WP_012580872.1">
    <property type="nucleotide sequence ID" value="NC_011660.1"/>
</dbReference>
<dbReference type="KEGG" id="lmh:LMHCC_0318"/>
<dbReference type="HOGENOM" id="CLU_042384_0_0_9"/>
<dbReference type="GO" id="GO:0005886">
    <property type="term" value="C:plasma membrane"/>
    <property type="evidence" value="ECO:0007669"/>
    <property type="project" value="UniProtKB-SubCell"/>
</dbReference>
<dbReference type="InterPro" id="IPR007383">
    <property type="entry name" value="DUF445"/>
</dbReference>
<dbReference type="InterPro" id="IPR016991">
    <property type="entry name" value="UCP032178"/>
</dbReference>
<dbReference type="PANTHER" id="PTHR35791">
    <property type="entry name" value="UPF0754 MEMBRANE PROTEIN YHEB"/>
    <property type="match status" value="1"/>
</dbReference>
<dbReference type="PANTHER" id="PTHR35791:SF1">
    <property type="entry name" value="UPF0754 MEMBRANE PROTEIN YHEB"/>
    <property type="match status" value="1"/>
</dbReference>
<dbReference type="Pfam" id="PF04286">
    <property type="entry name" value="DUF445"/>
    <property type="match status" value="1"/>
</dbReference>
<dbReference type="PIRSF" id="PIRSF032178">
    <property type="entry name" value="UCP032178"/>
    <property type="match status" value="1"/>
</dbReference>
<proteinExistence type="inferred from homology"/>